<dbReference type="EC" id="5.2.1.8" evidence="1"/>
<dbReference type="EMBL" id="AE017180">
    <property type="protein sequence ID" value="AAR35170.1"/>
    <property type="molecule type" value="Genomic_DNA"/>
</dbReference>
<dbReference type="RefSeq" id="NP_952843.1">
    <property type="nucleotide sequence ID" value="NC_002939.5"/>
</dbReference>
<dbReference type="RefSeq" id="WP_010942437.1">
    <property type="nucleotide sequence ID" value="NC_002939.5"/>
</dbReference>
<dbReference type="SMR" id="Q74C81"/>
<dbReference type="FunCoup" id="Q74C81">
    <property type="interactions" value="670"/>
</dbReference>
<dbReference type="STRING" id="243231.GSU1793"/>
<dbReference type="EnsemblBacteria" id="AAR35170">
    <property type="protein sequence ID" value="AAR35170"/>
    <property type="gene ID" value="GSU1793"/>
</dbReference>
<dbReference type="KEGG" id="gsu:GSU1793"/>
<dbReference type="PATRIC" id="fig|243231.5.peg.1831"/>
<dbReference type="eggNOG" id="COG0544">
    <property type="taxonomic scope" value="Bacteria"/>
</dbReference>
<dbReference type="HOGENOM" id="CLU_033058_3_2_7"/>
<dbReference type="InParanoid" id="Q74C81"/>
<dbReference type="OrthoDB" id="9767721at2"/>
<dbReference type="Proteomes" id="UP000000577">
    <property type="component" value="Chromosome"/>
</dbReference>
<dbReference type="GO" id="GO:0005737">
    <property type="term" value="C:cytoplasm"/>
    <property type="evidence" value="ECO:0007669"/>
    <property type="project" value="UniProtKB-SubCell"/>
</dbReference>
<dbReference type="GO" id="GO:0003755">
    <property type="term" value="F:peptidyl-prolyl cis-trans isomerase activity"/>
    <property type="evidence" value="ECO:0000318"/>
    <property type="project" value="GO_Central"/>
</dbReference>
<dbReference type="GO" id="GO:0044183">
    <property type="term" value="F:protein folding chaperone"/>
    <property type="evidence" value="ECO:0000318"/>
    <property type="project" value="GO_Central"/>
</dbReference>
<dbReference type="GO" id="GO:0043022">
    <property type="term" value="F:ribosome binding"/>
    <property type="evidence" value="ECO:0000318"/>
    <property type="project" value="GO_Central"/>
</dbReference>
<dbReference type="GO" id="GO:0051083">
    <property type="term" value="P:'de novo' cotranslational protein folding"/>
    <property type="evidence" value="ECO:0000318"/>
    <property type="project" value="GO_Central"/>
</dbReference>
<dbReference type="GO" id="GO:0051301">
    <property type="term" value="P:cell division"/>
    <property type="evidence" value="ECO:0007669"/>
    <property type="project" value="UniProtKB-KW"/>
</dbReference>
<dbReference type="GO" id="GO:0061077">
    <property type="term" value="P:chaperone-mediated protein folding"/>
    <property type="evidence" value="ECO:0000318"/>
    <property type="project" value="GO_Central"/>
</dbReference>
<dbReference type="GO" id="GO:0015031">
    <property type="term" value="P:protein transport"/>
    <property type="evidence" value="ECO:0007669"/>
    <property type="project" value="UniProtKB-UniRule"/>
</dbReference>
<dbReference type="GO" id="GO:0043335">
    <property type="term" value="P:protein unfolding"/>
    <property type="evidence" value="ECO:0000318"/>
    <property type="project" value="GO_Central"/>
</dbReference>
<dbReference type="FunFam" id="3.10.50.40:FF:000001">
    <property type="entry name" value="Trigger factor"/>
    <property type="match status" value="1"/>
</dbReference>
<dbReference type="FunFam" id="3.30.70.1050:FF:000015">
    <property type="entry name" value="Trigger factor"/>
    <property type="match status" value="1"/>
</dbReference>
<dbReference type="Gene3D" id="3.10.50.40">
    <property type="match status" value="1"/>
</dbReference>
<dbReference type="Gene3D" id="3.30.70.1050">
    <property type="entry name" value="Trigger factor ribosome-binding domain"/>
    <property type="match status" value="1"/>
</dbReference>
<dbReference type="Gene3D" id="1.10.3120.10">
    <property type="entry name" value="Trigger factor, C-terminal domain"/>
    <property type="match status" value="1"/>
</dbReference>
<dbReference type="HAMAP" id="MF_00303">
    <property type="entry name" value="Trigger_factor_Tig"/>
    <property type="match status" value="1"/>
</dbReference>
<dbReference type="InterPro" id="IPR046357">
    <property type="entry name" value="PPIase_dom_sf"/>
</dbReference>
<dbReference type="InterPro" id="IPR001179">
    <property type="entry name" value="PPIase_FKBP_dom"/>
</dbReference>
<dbReference type="InterPro" id="IPR005215">
    <property type="entry name" value="Trig_fac"/>
</dbReference>
<dbReference type="InterPro" id="IPR008880">
    <property type="entry name" value="Trigger_fac_C"/>
</dbReference>
<dbReference type="InterPro" id="IPR037041">
    <property type="entry name" value="Trigger_fac_C_sf"/>
</dbReference>
<dbReference type="InterPro" id="IPR008881">
    <property type="entry name" value="Trigger_fac_ribosome-bd_bac"/>
</dbReference>
<dbReference type="InterPro" id="IPR036611">
    <property type="entry name" value="Trigger_fac_ribosome-bd_sf"/>
</dbReference>
<dbReference type="InterPro" id="IPR027304">
    <property type="entry name" value="Trigger_fact/SurA_dom_sf"/>
</dbReference>
<dbReference type="NCBIfam" id="TIGR00115">
    <property type="entry name" value="tig"/>
    <property type="match status" value="1"/>
</dbReference>
<dbReference type="PANTHER" id="PTHR30560">
    <property type="entry name" value="TRIGGER FACTOR CHAPERONE AND PEPTIDYL-PROLYL CIS/TRANS ISOMERASE"/>
    <property type="match status" value="1"/>
</dbReference>
<dbReference type="PANTHER" id="PTHR30560:SF3">
    <property type="entry name" value="TRIGGER FACTOR-LIKE PROTEIN TIG, CHLOROPLASTIC"/>
    <property type="match status" value="1"/>
</dbReference>
<dbReference type="Pfam" id="PF00254">
    <property type="entry name" value="FKBP_C"/>
    <property type="match status" value="1"/>
</dbReference>
<dbReference type="Pfam" id="PF05698">
    <property type="entry name" value="Trigger_C"/>
    <property type="match status" value="1"/>
</dbReference>
<dbReference type="Pfam" id="PF05697">
    <property type="entry name" value="Trigger_N"/>
    <property type="match status" value="1"/>
</dbReference>
<dbReference type="PIRSF" id="PIRSF003095">
    <property type="entry name" value="Trigger_factor"/>
    <property type="match status" value="1"/>
</dbReference>
<dbReference type="SUPFAM" id="SSF54534">
    <property type="entry name" value="FKBP-like"/>
    <property type="match status" value="1"/>
</dbReference>
<dbReference type="SUPFAM" id="SSF109998">
    <property type="entry name" value="Triger factor/SurA peptide-binding domain-like"/>
    <property type="match status" value="1"/>
</dbReference>
<dbReference type="SUPFAM" id="SSF102735">
    <property type="entry name" value="Trigger factor ribosome-binding domain"/>
    <property type="match status" value="1"/>
</dbReference>
<dbReference type="PROSITE" id="PS50059">
    <property type="entry name" value="FKBP_PPIASE"/>
    <property type="match status" value="1"/>
</dbReference>
<feature type="chain" id="PRO_0000179357" description="Trigger factor">
    <location>
        <begin position="1"/>
        <end position="431"/>
    </location>
</feature>
<feature type="domain" description="PPIase FKBP-type" evidence="1">
    <location>
        <begin position="163"/>
        <end position="248"/>
    </location>
</feature>
<evidence type="ECO:0000255" key="1">
    <source>
        <dbReference type="HAMAP-Rule" id="MF_00303"/>
    </source>
</evidence>
<gene>
    <name evidence="1" type="primary">tig</name>
    <name type="ordered locus">GSU1793</name>
</gene>
<accession>Q74C81</accession>
<organism>
    <name type="scientific">Geobacter sulfurreducens (strain ATCC 51573 / DSM 12127 / PCA)</name>
    <dbReference type="NCBI Taxonomy" id="243231"/>
    <lineage>
        <taxon>Bacteria</taxon>
        <taxon>Pseudomonadati</taxon>
        <taxon>Thermodesulfobacteriota</taxon>
        <taxon>Desulfuromonadia</taxon>
        <taxon>Geobacterales</taxon>
        <taxon>Geobacteraceae</taxon>
        <taxon>Geobacter</taxon>
    </lineage>
</organism>
<protein>
    <recommendedName>
        <fullName evidence="1">Trigger factor</fullName>
        <shortName evidence="1">TF</shortName>
        <ecNumber evidence="1">5.2.1.8</ecNumber>
    </recommendedName>
    <alternativeName>
        <fullName evidence="1">PPIase</fullName>
    </alternativeName>
</protein>
<name>TIG_GEOSL</name>
<comment type="function">
    <text evidence="1">Involved in protein export. Acts as a chaperone by maintaining the newly synthesized protein in an open conformation. Functions as a peptidyl-prolyl cis-trans isomerase.</text>
</comment>
<comment type="catalytic activity">
    <reaction evidence="1">
        <text>[protein]-peptidylproline (omega=180) = [protein]-peptidylproline (omega=0)</text>
        <dbReference type="Rhea" id="RHEA:16237"/>
        <dbReference type="Rhea" id="RHEA-COMP:10747"/>
        <dbReference type="Rhea" id="RHEA-COMP:10748"/>
        <dbReference type="ChEBI" id="CHEBI:83833"/>
        <dbReference type="ChEBI" id="CHEBI:83834"/>
        <dbReference type="EC" id="5.2.1.8"/>
    </reaction>
</comment>
<comment type="subcellular location">
    <subcellularLocation>
        <location>Cytoplasm</location>
    </subcellularLocation>
    <text evidence="1">About half TF is bound to the ribosome near the polypeptide exit tunnel while the other half is free in the cytoplasm.</text>
</comment>
<comment type="domain">
    <text evidence="1">Consists of 3 domains; the N-terminus binds the ribosome, the middle domain has PPIase activity, while the C-terminus has intrinsic chaperone activity on its own.</text>
</comment>
<comment type="similarity">
    <text evidence="1">Belongs to the FKBP-type PPIase family. Tig subfamily.</text>
</comment>
<proteinExistence type="inferred from homology"/>
<reference key="1">
    <citation type="journal article" date="2003" name="Science">
        <title>Genome of Geobacter sulfurreducens: metal reduction in subsurface environments.</title>
        <authorList>
            <person name="Methe B.A."/>
            <person name="Nelson K.E."/>
            <person name="Eisen J.A."/>
            <person name="Paulsen I.T."/>
            <person name="Nelson W.C."/>
            <person name="Heidelberg J.F."/>
            <person name="Wu D."/>
            <person name="Wu M."/>
            <person name="Ward N.L."/>
            <person name="Beanan M.J."/>
            <person name="Dodson R.J."/>
            <person name="Madupu R."/>
            <person name="Brinkac L.M."/>
            <person name="Daugherty S.C."/>
            <person name="DeBoy R.T."/>
            <person name="Durkin A.S."/>
            <person name="Gwinn M.L."/>
            <person name="Kolonay J.F."/>
            <person name="Sullivan S.A."/>
            <person name="Haft D.H."/>
            <person name="Selengut J."/>
            <person name="Davidsen T.M."/>
            <person name="Zafar N."/>
            <person name="White O."/>
            <person name="Tran B."/>
            <person name="Romero C."/>
            <person name="Forberger H.A."/>
            <person name="Weidman J.F."/>
            <person name="Khouri H.M."/>
            <person name="Feldblyum T.V."/>
            <person name="Utterback T.R."/>
            <person name="Van Aken S.E."/>
            <person name="Lovley D.R."/>
            <person name="Fraser C.M."/>
        </authorList>
    </citation>
    <scope>NUCLEOTIDE SEQUENCE [LARGE SCALE GENOMIC DNA]</scope>
    <source>
        <strain>ATCC 51573 / DSM 12127 / PCA</strain>
    </source>
</reference>
<keyword id="KW-0131">Cell cycle</keyword>
<keyword id="KW-0132">Cell division</keyword>
<keyword id="KW-0143">Chaperone</keyword>
<keyword id="KW-0963">Cytoplasm</keyword>
<keyword id="KW-0413">Isomerase</keyword>
<keyword id="KW-1185">Reference proteome</keyword>
<keyword id="KW-0697">Rotamase</keyword>
<sequence length="431" mass="48702">MTSTVESLSSVKKKISFEIPADRVTSEIDKVFEKIRKRAAIKGFRKGKAPQSLIEKHYADVMEGDVLKNLFEETYFKALAEHKIFPVSHPVIDSDEIKRGTPFTYSATVEVLPEIDVKDYNGLEVAKETFTPDESIVEKRLQEMRENMSHLRSLEEGSVAEDGHFAVIDFTGYVDGVPFEGGSAESYQLELGSGRFIPGFEEQIVGMKTGESKSMSLNFPEDYWNKDLAGKEARFDVILSEIKVKELPELNDEFAAQMGEFDTITQLRDKIAELYEKQENDRIKADLQDRVVQALIEKNEIEVPSTLVDRQLQTMLANAQNRLAQQRLTFEMMGMNEESFKAQYRTVAENQVKGSLLLEAVAKKEGISVEEADIEKKLLEIAGGNEEELGRVKSFYEQNRAARENLVAHLAEEKVMSFLLGSAVISEKTKE</sequence>